<sequence length="270" mass="30385">MSDQQQPPVYKIALGIEYDGSKYYGWQRQNEVRSVQEKLEKALSQVANEPITVFCAGRTDAGVHGTGQVVHFETTAQRKDAAWTLGVNANLPGDIAVRWVKAVPDDFHARFSATARRYRYIIYNHRLRPAVLSKGVTHFYEPLDAERMHRAAQCLLGENDFTSFRAVQCQSRTPWRNVMHINVTRHGPYVVVDIKANAFVHHMVRNIVGSLMEVGAHNQPESWIAELLAAKDRTLAAATAKAEGLYLVAVDYPDRYDLPKPPMGPLFLAD</sequence>
<comment type="function">
    <text evidence="1">Formation of pseudouridine at positions 38, 39 and 40 in the anticodon stem and loop of transfer RNAs.</text>
</comment>
<comment type="catalytic activity">
    <reaction evidence="1">
        <text>uridine(38/39/40) in tRNA = pseudouridine(38/39/40) in tRNA</text>
        <dbReference type="Rhea" id="RHEA:22376"/>
        <dbReference type="Rhea" id="RHEA-COMP:10085"/>
        <dbReference type="Rhea" id="RHEA-COMP:10087"/>
        <dbReference type="ChEBI" id="CHEBI:65314"/>
        <dbReference type="ChEBI" id="CHEBI:65315"/>
        <dbReference type="EC" id="5.4.99.12"/>
    </reaction>
</comment>
<comment type="subunit">
    <text evidence="1">Homodimer.</text>
</comment>
<comment type="similarity">
    <text evidence="1">Belongs to the tRNA pseudouridine synthase TruA family.</text>
</comment>
<gene>
    <name evidence="1" type="primary">truA</name>
    <name type="ordered locus">ECIAI39_2467</name>
</gene>
<name>TRUA_ECO7I</name>
<accession>B7NNZ9</accession>
<proteinExistence type="inferred from homology"/>
<evidence type="ECO:0000255" key="1">
    <source>
        <dbReference type="HAMAP-Rule" id="MF_00171"/>
    </source>
</evidence>
<dbReference type="EC" id="5.4.99.12" evidence="1"/>
<dbReference type="EMBL" id="CU928164">
    <property type="protein sequence ID" value="CAR18593.1"/>
    <property type="molecule type" value="Genomic_DNA"/>
</dbReference>
<dbReference type="RefSeq" id="WP_001283590.1">
    <property type="nucleotide sequence ID" value="NC_011750.1"/>
</dbReference>
<dbReference type="RefSeq" id="YP_002408423.1">
    <property type="nucleotide sequence ID" value="NC_011750.1"/>
</dbReference>
<dbReference type="SMR" id="B7NNZ9"/>
<dbReference type="STRING" id="585057.ECIAI39_2467"/>
<dbReference type="GeneID" id="75172446"/>
<dbReference type="KEGG" id="ect:ECIAI39_2467"/>
<dbReference type="PATRIC" id="fig|585057.6.peg.2570"/>
<dbReference type="HOGENOM" id="CLU_014673_0_2_6"/>
<dbReference type="Proteomes" id="UP000000749">
    <property type="component" value="Chromosome"/>
</dbReference>
<dbReference type="GO" id="GO:0003723">
    <property type="term" value="F:RNA binding"/>
    <property type="evidence" value="ECO:0007669"/>
    <property type="project" value="InterPro"/>
</dbReference>
<dbReference type="GO" id="GO:0160147">
    <property type="term" value="F:tRNA pseudouridine(38-40) synthase activity"/>
    <property type="evidence" value="ECO:0007669"/>
    <property type="project" value="UniProtKB-EC"/>
</dbReference>
<dbReference type="GO" id="GO:0031119">
    <property type="term" value="P:tRNA pseudouridine synthesis"/>
    <property type="evidence" value="ECO:0007669"/>
    <property type="project" value="UniProtKB-UniRule"/>
</dbReference>
<dbReference type="CDD" id="cd02570">
    <property type="entry name" value="PseudoU_synth_EcTruA"/>
    <property type="match status" value="1"/>
</dbReference>
<dbReference type="FunFam" id="3.30.70.580:FF:000001">
    <property type="entry name" value="tRNA pseudouridine synthase A"/>
    <property type="match status" value="1"/>
</dbReference>
<dbReference type="FunFam" id="3.30.70.660:FF:000001">
    <property type="entry name" value="tRNA pseudouridine synthase A"/>
    <property type="match status" value="1"/>
</dbReference>
<dbReference type="Gene3D" id="3.30.70.660">
    <property type="entry name" value="Pseudouridine synthase I, catalytic domain, C-terminal subdomain"/>
    <property type="match status" value="1"/>
</dbReference>
<dbReference type="Gene3D" id="3.30.70.580">
    <property type="entry name" value="Pseudouridine synthase I, catalytic domain, N-terminal subdomain"/>
    <property type="match status" value="1"/>
</dbReference>
<dbReference type="HAMAP" id="MF_00171">
    <property type="entry name" value="TruA"/>
    <property type="match status" value="1"/>
</dbReference>
<dbReference type="InterPro" id="IPR020103">
    <property type="entry name" value="PsdUridine_synth_cat_dom_sf"/>
</dbReference>
<dbReference type="InterPro" id="IPR001406">
    <property type="entry name" value="PsdUridine_synth_TruA"/>
</dbReference>
<dbReference type="InterPro" id="IPR020097">
    <property type="entry name" value="PsdUridine_synth_TruA_a/b_dom"/>
</dbReference>
<dbReference type="InterPro" id="IPR020095">
    <property type="entry name" value="PsdUridine_synth_TruA_C"/>
</dbReference>
<dbReference type="InterPro" id="IPR020094">
    <property type="entry name" value="TruA/RsuA/RluB/E/F_N"/>
</dbReference>
<dbReference type="NCBIfam" id="TIGR00071">
    <property type="entry name" value="hisT_truA"/>
    <property type="match status" value="1"/>
</dbReference>
<dbReference type="PANTHER" id="PTHR11142">
    <property type="entry name" value="PSEUDOURIDYLATE SYNTHASE"/>
    <property type="match status" value="1"/>
</dbReference>
<dbReference type="PANTHER" id="PTHR11142:SF0">
    <property type="entry name" value="TRNA PSEUDOURIDINE SYNTHASE-LIKE 1"/>
    <property type="match status" value="1"/>
</dbReference>
<dbReference type="Pfam" id="PF01416">
    <property type="entry name" value="PseudoU_synth_1"/>
    <property type="match status" value="2"/>
</dbReference>
<dbReference type="PIRSF" id="PIRSF001430">
    <property type="entry name" value="tRNA_psdUrid_synth"/>
    <property type="match status" value="1"/>
</dbReference>
<dbReference type="SUPFAM" id="SSF55120">
    <property type="entry name" value="Pseudouridine synthase"/>
    <property type="match status" value="1"/>
</dbReference>
<reference key="1">
    <citation type="journal article" date="2009" name="PLoS Genet.">
        <title>Organised genome dynamics in the Escherichia coli species results in highly diverse adaptive paths.</title>
        <authorList>
            <person name="Touchon M."/>
            <person name="Hoede C."/>
            <person name="Tenaillon O."/>
            <person name="Barbe V."/>
            <person name="Baeriswyl S."/>
            <person name="Bidet P."/>
            <person name="Bingen E."/>
            <person name="Bonacorsi S."/>
            <person name="Bouchier C."/>
            <person name="Bouvet O."/>
            <person name="Calteau A."/>
            <person name="Chiapello H."/>
            <person name="Clermont O."/>
            <person name="Cruveiller S."/>
            <person name="Danchin A."/>
            <person name="Diard M."/>
            <person name="Dossat C."/>
            <person name="Karoui M.E."/>
            <person name="Frapy E."/>
            <person name="Garry L."/>
            <person name="Ghigo J.M."/>
            <person name="Gilles A.M."/>
            <person name="Johnson J."/>
            <person name="Le Bouguenec C."/>
            <person name="Lescat M."/>
            <person name="Mangenot S."/>
            <person name="Martinez-Jehanne V."/>
            <person name="Matic I."/>
            <person name="Nassif X."/>
            <person name="Oztas S."/>
            <person name="Petit M.A."/>
            <person name="Pichon C."/>
            <person name="Rouy Z."/>
            <person name="Ruf C.S."/>
            <person name="Schneider D."/>
            <person name="Tourret J."/>
            <person name="Vacherie B."/>
            <person name="Vallenet D."/>
            <person name="Medigue C."/>
            <person name="Rocha E.P.C."/>
            <person name="Denamur E."/>
        </authorList>
    </citation>
    <scope>NUCLEOTIDE SEQUENCE [LARGE SCALE GENOMIC DNA]</scope>
    <source>
        <strain>IAI39 / ExPEC</strain>
    </source>
</reference>
<organism>
    <name type="scientific">Escherichia coli O7:K1 (strain IAI39 / ExPEC)</name>
    <dbReference type="NCBI Taxonomy" id="585057"/>
    <lineage>
        <taxon>Bacteria</taxon>
        <taxon>Pseudomonadati</taxon>
        <taxon>Pseudomonadota</taxon>
        <taxon>Gammaproteobacteria</taxon>
        <taxon>Enterobacterales</taxon>
        <taxon>Enterobacteriaceae</taxon>
        <taxon>Escherichia</taxon>
    </lineage>
</organism>
<keyword id="KW-0413">Isomerase</keyword>
<keyword id="KW-0819">tRNA processing</keyword>
<feature type="chain" id="PRO_1000194554" description="tRNA pseudouridine synthase A">
    <location>
        <begin position="1"/>
        <end position="270"/>
    </location>
</feature>
<feature type="region of interest" description="RNA binding" evidence="1">
    <location>
        <begin position="107"/>
        <end position="111"/>
    </location>
</feature>
<feature type="region of interest" description="Interaction with tRNA" evidence="1">
    <location>
        <begin position="168"/>
        <end position="172"/>
    </location>
</feature>
<feature type="active site" description="Nucleophile" evidence="1">
    <location>
        <position position="60"/>
    </location>
</feature>
<feature type="binding site" evidence="1">
    <location>
        <position position="118"/>
    </location>
    <ligand>
        <name>substrate</name>
    </ligand>
</feature>
<feature type="site" description="Interaction with tRNA; Important for base-flipping" evidence="1">
    <location>
        <position position="58"/>
    </location>
</feature>
<feature type="site" description="Interaction with tRNA" evidence="1">
    <location>
        <position position="78"/>
    </location>
</feature>
<feature type="site" description="Interaction with tRNA" evidence="1">
    <location>
        <position position="110"/>
    </location>
</feature>
<feature type="site" description="Interaction with tRNA" evidence="1">
    <location>
        <position position="126"/>
    </location>
</feature>
<feature type="site" description="Interaction with tRNA" evidence="1">
    <location>
        <position position="139"/>
    </location>
</feature>
<protein>
    <recommendedName>
        <fullName evidence="1">tRNA pseudouridine synthase A</fullName>
        <ecNumber evidence="1">5.4.99.12</ecNumber>
    </recommendedName>
    <alternativeName>
        <fullName evidence="1">tRNA pseudouridine(38-40) synthase</fullName>
    </alternativeName>
    <alternativeName>
        <fullName evidence="1">tRNA pseudouridylate synthase I</fullName>
    </alternativeName>
    <alternativeName>
        <fullName evidence="1">tRNA-uridine isomerase I</fullName>
    </alternativeName>
</protein>